<accession>Q89AB6</accession>
<protein>
    <recommendedName>
        <fullName>Fructose-bisphosphate aldolase class 2</fullName>
        <shortName>FBP aldolase</shortName>
        <shortName>FBPA</shortName>
        <ecNumber>4.1.2.13</ecNumber>
    </recommendedName>
    <alternativeName>
        <fullName>Fructose-1,6-bisphosphate aldolase</fullName>
    </alternativeName>
    <alternativeName>
        <fullName>Fructose-bisphosphate aldolase class II</fullName>
    </alternativeName>
</protein>
<dbReference type="EC" id="4.1.2.13"/>
<dbReference type="EMBL" id="AE016826">
    <property type="protein sequence ID" value="AAO27113.1"/>
    <property type="molecule type" value="Genomic_DNA"/>
</dbReference>
<dbReference type="RefSeq" id="WP_011091514.1">
    <property type="nucleotide sequence ID" value="NC_004545.1"/>
</dbReference>
<dbReference type="SMR" id="Q89AB6"/>
<dbReference type="STRING" id="224915.bbp_401"/>
<dbReference type="KEGG" id="bab:bbp_401"/>
<dbReference type="eggNOG" id="COG0191">
    <property type="taxonomic scope" value="Bacteria"/>
</dbReference>
<dbReference type="HOGENOM" id="CLU_036923_0_0_6"/>
<dbReference type="OrthoDB" id="9803995at2"/>
<dbReference type="UniPathway" id="UPA00109">
    <property type="reaction ID" value="UER00183"/>
</dbReference>
<dbReference type="Proteomes" id="UP000000601">
    <property type="component" value="Chromosome"/>
</dbReference>
<dbReference type="GO" id="GO:0005829">
    <property type="term" value="C:cytosol"/>
    <property type="evidence" value="ECO:0007669"/>
    <property type="project" value="TreeGrafter"/>
</dbReference>
<dbReference type="GO" id="GO:0004332">
    <property type="term" value="F:fructose-bisphosphate aldolase activity"/>
    <property type="evidence" value="ECO:0007669"/>
    <property type="project" value="UniProtKB-EC"/>
</dbReference>
<dbReference type="GO" id="GO:0008270">
    <property type="term" value="F:zinc ion binding"/>
    <property type="evidence" value="ECO:0007669"/>
    <property type="project" value="InterPro"/>
</dbReference>
<dbReference type="GO" id="GO:0006094">
    <property type="term" value="P:gluconeogenesis"/>
    <property type="evidence" value="ECO:0007669"/>
    <property type="project" value="TreeGrafter"/>
</dbReference>
<dbReference type="GO" id="GO:0006096">
    <property type="term" value="P:glycolytic process"/>
    <property type="evidence" value="ECO:0007669"/>
    <property type="project" value="UniProtKB-UniPathway"/>
</dbReference>
<dbReference type="CDD" id="cd00946">
    <property type="entry name" value="FBP_aldolase_IIA"/>
    <property type="match status" value="1"/>
</dbReference>
<dbReference type="Gene3D" id="3.20.20.70">
    <property type="entry name" value="Aldolase class I"/>
    <property type="match status" value="1"/>
</dbReference>
<dbReference type="InterPro" id="IPR013785">
    <property type="entry name" value="Aldolase_TIM"/>
</dbReference>
<dbReference type="InterPro" id="IPR000771">
    <property type="entry name" value="FBA_II"/>
</dbReference>
<dbReference type="InterPro" id="IPR006411">
    <property type="entry name" value="Fruct_bisP_bact"/>
</dbReference>
<dbReference type="NCBIfam" id="TIGR00167">
    <property type="entry name" value="cbbA"/>
    <property type="match status" value="1"/>
</dbReference>
<dbReference type="NCBIfam" id="TIGR01520">
    <property type="entry name" value="FruBisAldo_II_A"/>
    <property type="match status" value="1"/>
</dbReference>
<dbReference type="NCBIfam" id="NF006628">
    <property type="entry name" value="PRK09197.1"/>
    <property type="match status" value="1"/>
</dbReference>
<dbReference type="PANTHER" id="PTHR30559:SF0">
    <property type="entry name" value="FRUCTOSE-BISPHOSPHATE ALDOLASE"/>
    <property type="match status" value="1"/>
</dbReference>
<dbReference type="PANTHER" id="PTHR30559">
    <property type="entry name" value="FRUCTOSE-BISPHOSPHATE ALDOLASE CLASS 2"/>
    <property type="match status" value="1"/>
</dbReference>
<dbReference type="Pfam" id="PF01116">
    <property type="entry name" value="F_bP_aldolase"/>
    <property type="match status" value="1"/>
</dbReference>
<dbReference type="PIRSF" id="PIRSF001359">
    <property type="entry name" value="F_bP_aldolase_II"/>
    <property type="match status" value="1"/>
</dbReference>
<dbReference type="SUPFAM" id="SSF51569">
    <property type="entry name" value="Aldolase"/>
    <property type="match status" value="1"/>
</dbReference>
<dbReference type="PROSITE" id="PS00602">
    <property type="entry name" value="ALDOLASE_CLASS_II_1"/>
    <property type="match status" value="1"/>
</dbReference>
<dbReference type="PROSITE" id="PS00806">
    <property type="entry name" value="ALDOLASE_CLASS_II_2"/>
    <property type="match status" value="1"/>
</dbReference>
<evidence type="ECO:0000250" key="1"/>
<evidence type="ECO:0000305" key="2"/>
<comment type="function">
    <text evidence="1">Catalyzes the aldol condensation of dihydroxyacetone phosphate (DHAP or glycerone-phosphate) with glyceraldehyde 3-phosphate (G3P) to form fructose 1,6-bisphosphate (FBP) in gluconeogenesis and the reverse reaction in glycolysis.</text>
</comment>
<comment type="catalytic activity">
    <reaction>
        <text>beta-D-fructose 1,6-bisphosphate = D-glyceraldehyde 3-phosphate + dihydroxyacetone phosphate</text>
        <dbReference type="Rhea" id="RHEA:14729"/>
        <dbReference type="ChEBI" id="CHEBI:32966"/>
        <dbReference type="ChEBI" id="CHEBI:57642"/>
        <dbReference type="ChEBI" id="CHEBI:59776"/>
        <dbReference type="EC" id="4.1.2.13"/>
    </reaction>
</comment>
<comment type="cofactor">
    <cofactor evidence="1">
        <name>Zn(2+)</name>
        <dbReference type="ChEBI" id="CHEBI:29105"/>
    </cofactor>
    <text evidence="1">Binds 2 Zn(2+) ions per subunit. One is catalytic and the other provides a structural contribution.</text>
</comment>
<comment type="pathway">
    <text>Carbohydrate degradation; glycolysis; D-glyceraldehyde 3-phosphate and glycerone phosphate from D-glucose: step 4/4.</text>
</comment>
<comment type="similarity">
    <text evidence="2">Belongs to the class II fructose-bisphosphate aldolase family.</text>
</comment>
<sequence length="359" mass="40487">MCNILNKIKPGVITGNEALKLFKIAKKNHFAIPAINCINTDSINIVLETAKKAKSPVIIQFSYGGSNFISGPGLTTNILHKKAIIGALSGANHVHIMAKHYNVPVILHTDHCNKNMLPWIDELINVGTKHFKTYNKPLFTSHMIDLSNEKLDYNINICSKYLEKMRKINMLLEIELGCTGGEEDGINNTKINKSLLYTQPNEVNYAYERLSSVGPEFIIAASFGNVHGVYKSGNVRLTPDILKKSQNYVSKKHNLSCNPLCFVFHGGSGSSEKDIKKSIKYGVIKMNIDTDIQWATWQGILNFYNKNNKYLHNQIGNLDNENKPNKKYYDPRTWIRSSQISVSNHLTKIFRILNSCNTL</sequence>
<reference key="1">
    <citation type="journal article" date="2003" name="Proc. Natl. Acad. Sci. U.S.A.">
        <title>Reductive genome evolution in Buchnera aphidicola.</title>
        <authorList>
            <person name="van Ham R.C.H.J."/>
            <person name="Kamerbeek J."/>
            <person name="Palacios C."/>
            <person name="Rausell C."/>
            <person name="Abascal F."/>
            <person name="Bastolla U."/>
            <person name="Fernandez J.M."/>
            <person name="Jimenez L."/>
            <person name="Postigo M."/>
            <person name="Silva F.J."/>
            <person name="Tamames J."/>
            <person name="Viguera E."/>
            <person name="Latorre A."/>
            <person name="Valencia A."/>
            <person name="Moran F."/>
            <person name="Moya A."/>
        </authorList>
    </citation>
    <scope>NUCLEOTIDE SEQUENCE [LARGE SCALE GENOMIC DNA]</scope>
    <source>
        <strain>Bp</strain>
    </source>
</reference>
<organism>
    <name type="scientific">Buchnera aphidicola subsp. Baizongia pistaciae (strain Bp)</name>
    <dbReference type="NCBI Taxonomy" id="224915"/>
    <lineage>
        <taxon>Bacteria</taxon>
        <taxon>Pseudomonadati</taxon>
        <taxon>Pseudomonadota</taxon>
        <taxon>Gammaproteobacteria</taxon>
        <taxon>Enterobacterales</taxon>
        <taxon>Erwiniaceae</taxon>
        <taxon>Buchnera</taxon>
    </lineage>
</organism>
<gene>
    <name type="primary">fbaA</name>
    <name type="synonym">fba</name>
    <name type="ordered locus">bbp_401</name>
</gene>
<feature type="chain" id="PRO_0000178710" description="Fructose-bisphosphate aldolase class 2">
    <location>
        <begin position="1"/>
        <end position="359"/>
    </location>
</feature>
<feature type="active site" description="Proton donor" evidence="1">
    <location>
        <position position="110"/>
    </location>
</feature>
<feature type="binding site" evidence="1">
    <location>
        <position position="62"/>
    </location>
    <ligand>
        <name>D-glyceraldehyde 3-phosphate</name>
        <dbReference type="ChEBI" id="CHEBI:59776"/>
    </ligand>
</feature>
<feature type="binding site" evidence="1">
    <location>
        <position position="111"/>
    </location>
    <ligand>
        <name>Zn(2+)</name>
        <dbReference type="ChEBI" id="CHEBI:29105"/>
        <label>1</label>
        <note>catalytic</note>
    </ligand>
</feature>
<feature type="binding site" evidence="1">
    <location>
        <position position="145"/>
    </location>
    <ligand>
        <name>Zn(2+)</name>
        <dbReference type="ChEBI" id="CHEBI:29105"/>
        <label>2</label>
    </ligand>
</feature>
<feature type="binding site" evidence="1">
    <location>
        <position position="175"/>
    </location>
    <ligand>
        <name>Zn(2+)</name>
        <dbReference type="ChEBI" id="CHEBI:29105"/>
        <label>2</label>
    </ligand>
</feature>
<feature type="binding site" evidence="1">
    <location>
        <position position="227"/>
    </location>
    <ligand>
        <name>Zn(2+)</name>
        <dbReference type="ChEBI" id="CHEBI:29105"/>
        <label>1</label>
        <note>catalytic</note>
    </ligand>
</feature>
<feature type="binding site" evidence="1">
    <location>
        <position position="228"/>
    </location>
    <ligand>
        <name>dihydroxyacetone phosphate</name>
        <dbReference type="ChEBI" id="CHEBI:57642"/>
    </ligand>
</feature>
<feature type="binding site" evidence="1">
    <location>
        <position position="265"/>
    </location>
    <ligand>
        <name>Zn(2+)</name>
        <dbReference type="ChEBI" id="CHEBI:29105"/>
        <label>1</label>
        <note>catalytic</note>
    </ligand>
</feature>
<feature type="binding site" evidence="1">
    <location>
        <begin position="266"/>
        <end position="268"/>
    </location>
    <ligand>
        <name>dihydroxyacetone phosphate</name>
        <dbReference type="ChEBI" id="CHEBI:57642"/>
    </ligand>
</feature>
<feature type="binding site" evidence="1">
    <location>
        <begin position="287"/>
        <end position="290"/>
    </location>
    <ligand>
        <name>dihydroxyacetone phosphate</name>
        <dbReference type="ChEBI" id="CHEBI:57642"/>
    </ligand>
</feature>
<name>ALF_BUCBP</name>
<proteinExistence type="inferred from homology"/>
<keyword id="KW-0324">Glycolysis</keyword>
<keyword id="KW-0456">Lyase</keyword>
<keyword id="KW-0479">Metal-binding</keyword>
<keyword id="KW-1185">Reference proteome</keyword>
<keyword id="KW-0862">Zinc</keyword>